<keyword id="KW-0997">Cell inner membrane</keyword>
<keyword id="KW-1003">Cell membrane</keyword>
<keyword id="KW-0407">Ion channel</keyword>
<keyword id="KW-0406">Ion transport</keyword>
<keyword id="KW-0472">Membrane</keyword>
<keyword id="KW-0812">Transmembrane</keyword>
<keyword id="KW-1133">Transmembrane helix</keyword>
<keyword id="KW-0813">Transport</keyword>
<sequence>MLKEFQEFALKGNMVDLAIGVIIGGAFGGLVNSIVNDIIMPIIGLITGGIDFSNMFIQLAGDPKTTLAAAREAGATIAYGNFITLLINFLIIAWVLFLVVKLMNRLKKREEAKPAPAAPSEEVLLTEIRDILAKQQKA</sequence>
<evidence type="ECO:0000255" key="1">
    <source>
        <dbReference type="HAMAP-Rule" id="MF_00115"/>
    </source>
</evidence>
<evidence type="ECO:0000305" key="2"/>
<organism>
    <name type="scientific">Brucella melitensis biotype 1 (strain ATCC 23456 / CCUG 17765 / NCTC 10094 / 16M)</name>
    <dbReference type="NCBI Taxonomy" id="224914"/>
    <lineage>
        <taxon>Bacteria</taxon>
        <taxon>Pseudomonadati</taxon>
        <taxon>Pseudomonadota</taxon>
        <taxon>Alphaproteobacteria</taxon>
        <taxon>Hyphomicrobiales</taxon>
        <taxon>Brucellaceae</taxon>
        <taxon>Brucella/Ochrobactrum group</taxon>
        <taxon>Brucella</taxon>
    </lineage>
</organism>
<proteinExistence type="inferred from homology"/>
<gene>
    <name evidence="1" type="primary">mscL</name>
    <name type="ordered locus">BMEI1605</name>
</gene>
<accession>Q8YFB7</accession>
<reference key="1">
    <citation type="journal article" date="2002" name="Proc. Natl. Acad. Sci. U.S.A.">
        <title>The genome sequence of the facultative intracellular pathogen Brucella melitensis.</title>
        <authorList>
            <person name="DelVecchio V.G."/>
            <person name="Kapatral V."/>
            <person name="Redkar R.J."/>
            <person name="Patra G."/>
            <person name="Mujer C."/>
            <person name="Los T."/>
            <person name="Ivanova N."/>
            <person name="Anderson I."/>
            <person name="Bhattacharyya A."/>
            <person name="Lykidis A."/>
            <person name="Reznik G."/>
            <person name="Jablonski L."/>
            <person name="Larsen N."/>
            <person name="D'Souza M."/>
            <person name="Bernal A."/>
            <person name="Mazur M."/>
            <person name="Goltsman E."/>
            <person name="Selkov E."/>
            <person name="Elzer P.H."/>
            <person name="Hagius S."/>
            <person name="O'Callaghan D."/>
            <person name="Letesson J.-J."/>
            <person name="Haselkorn R."/>
            <person name="Kyrpides N.C."/>
            <person name="Overbeek R."/>
        </authorList>
    </citation>
    <scope>NUCLEOTIDE SEQUENCE [LARGE SCALE GENOMIC DNA]</scope>
    <source>
        <strain>ATCC 23456 / CCUG 17765 / NCTC 10094 / 16M</strain>
    </source>
</reference>
<comment type="function">
    <text evidence="1">Channel that opens in response to stretch forces in the membrane lipid bilayer. May participate in the regulation of osmotic pressure changes within the cell.</text>
</comment>
<comment type="subunit">
    <text evidence="1">Homopentamer.</text>
</comment>
<comment type="subcellular location">
    <subcellularLocation>
        <location evidence="1">Cell inner membrane</location>
        <topology evidence="1">Multi-pass membrane protein</topology>
    </subcellularLocation>
</comment>
<comment type="similarity">
    <text evidence="1">Belongs to the MscL family.</text>
</comment>
<comment type="sequence caution" evidence="2">
    <conflict type="erroneous initiation">
        <sequence resource="EMBL-CDS" id="AAL52786"/>
    </conflict>
</comment>
<protein>
    <recommendedName>
        <fullName evidence="1">Large-conductance mechanosensitive channel</fullName>
    </recommendedName>
</protein>
<feature type="chain" id="PRO_0000192435" description="Large-conductance mechanosensitive channel">
    <location>
        <begin position="1"/>
        <end position="138"/>
    </location>
</feature>
<feature type="transmembrane region" description="Helical" evidence="1">
    <location>
        <begin position="15"/>
        <end position="35"/>
    </location>
</feature>
<feature type="transmembrane region" description="Helical" evidence="1">
    <location>
        <begin position="38"/>
        <end position="58"/>
    </location>
</feature>
<feature type="transmembrane region" description="Helical" evidence="1">
    <location>
        <begin position="80"/>
        <end position="100"/>
    </location>
</feature>
<name>MSCL_BRUME</name>
<dbReference type="EMBL" id="AE008917">
    <property type="protein sequence ID" value="AAL52786.1"/>
    <property type="status" value="ALT_INIT"/>
    <property type="molecule type" value="Genomic_DNA"/>
</dbReference>
<dbReference type="PIR" id="AG3452">
    <property type="entry name" value="AG3452"/>
</dbReference>
<dbReference type="RefSeq" id="WP_002963483.1">
    <property type="nucleotide sequence ID" value="NZ_GG703778.1"/>
</dbReference>
<dbReference type="SMR" id="Q8YFB7"/>
<dbReference type="GeneID" id="97534292"/>
<dbReference type="KEGG" id="bme:BMEI1605"/>
<dbReference type="KEGG" id="bmel:DK63_1886"/>
<dbReference type="PATRIC" id="fig|224914.52.peg.1986"/>
<dbReference type="eggNOG" id="COG1970">
    <property type="taxonomic scope" value="Bacteria"/>
</dbReference>
<dbReference type="PhylomeDB" id="Q8YFB7"/>
<dbReference type="Proteomes" id="UP000000419">
    <property type="component" value="Chromosome I"/>
</dbReference>
<dbReference type="GO" id="GO:0005886">
    <property type="term" value="C:plasma membrane"/>
    <property type="evidence" value="ECO:0007669"/>
    <property type="project" value="UniProtKB-SubCell"/>
</dbReference>
<dbReference type="GO" id="GO:0008381">
    <property type="term" value="F:mechanosensitive monoatomic ion channel activity"/>
    <property type="evidence" value="ECO:0007669"/>
    <property type="project" value="UniProtKB-UniRule"/>
</dbReference>
<dbReference type="Gene3D" id="1.10.1200.120">
    <property type="entry name" value="Large-conductance mechanosensitive channel, MscL, domain 1"/>
    <property type="match status" value="1"/>
</dbReference>
<dbReference type="HAMAP" id="MF_00115">
    <property type="entry name" value="MscL"/>
    <property type="match status" value="1"/>
</dbReference>
<dbReference type="InterPro" id="IPR019823">
    <property type="entry name" value="Mechanosensitive_channel_CS"/>
</dbReference>
<dbReference type="InterPro" id="IPR001185">
    <property type="entry name" value="MS_channel"/>
</dbReference>
<dbReference type="InterPro" id="IPR037673">
    <property type="entry name" value="MSC/AndL"/>
</dbReference>
<dbReference type="InterPro" id="IPR036019">
    <property type="entry name" value="MscL_channel"/>
</dbReference>
<dbReference type="NCBIfam" id="TIGR00220">
    <property type="entry name" value="mscL"/>
    <property type="match status" value="1"/>
</dbReference>
<dbReference type="NCBIfam" id="NF001843">
    <property type="entry name" value="PRK00567.1-4"/>
    <property type="match status" value="1"/>
</dbReference>
<dbReference type="NCBIfam" id="NF010557">
    <property type="entry name" value="PRK13952.1"/>
    <property type="match status" value="1"/>
</dbReference>
<dbReference type="PANTHER" id="PTHR30266:SF2">
    <property type="entry name" value="LARGE-CONDUCTANCE MECHANOSENSITIVE CHANNEL"/>
    <property type="match status" value="1"/>
</dbReference>
<dbReference type="PANTHER" id="PTHR30266">
    <property type="entry name" value="MECHANOSENSITIVE CHANNEL MSCL"/>
    <property type="match status" value="1"/>
</dbReference>
<dbReference type="Pfam" id="PF01741">
    <property type="entry name" value="MscL"/>
    <property type="match status" value="1"/>
</dbReference>
<dbReference type="PRINTS" id="PR01264">
    <property type="entry name" value="MECHCHANNEL"/>
</dbReference>
<dbReference type="SUPFAM" id="SSF81330">
    <property type="entry name" value="Gated mechanosensitive channel"/>
    <property type="match status" value="1"/>
</dbReference>
<dbReference type="PROSITE" id="PS01327">
    <property type="entry name" value="MSCL"/>
    <property type="match status" value="1"/>
</dbReference>